<evidence type="ECO:0000250" key="1">
    <source>
        <dbReference type="UniProtKB" id="Q7Z3Z0"/>
    </source>
</evidence>
<evidence type="ECO:0000250" key="2">
    <source>
        <dbReference type="UniProtKB" id="Q8VCW2"/>
    </source>
</evidence>
<evidence type="ECO:0000255" key="3"/>
<evidence type="ECO:0000255" key="4">
    <source>
        <dbReference type="PROSITE-ProRule" id="PRU01188"/>
    </source>
</evidence>
<evidence type="ECO:0000256" key="5">
    <source>
        <dbReference type="SAM" id="MobiDB-lite"/>
    </source>
</evidence>
<evidence type="ECO:0000305" key="6"/>
<evidence type="ECO:0000312" key="7">
    <source>
        <dbReference type="EMBL" id="AAS00518.1"/>
    </source>
</evidence>
<gene>
    <name evidence="1" type="primary">KRT25</name>
</gene>
<accession>Q6R650</accession>
<sequence length="450" mass="49423">MSLRLPSGSRRASPRPTTGSLRLSGAGASFGAGNACSMPGIGSSFSCAFGSSSSGGNALGGNPCAGFTMNEGGLLSGNEKVTMQNLNDRLASYLENVRALEEANADLEQKIKGWYEKFGPGSCRGLDHDYSRYFPIIEDLKNQIIASTTSNANAVLQIDNARLTADDFRLKYENELALHQSVESDVNGLRRVLDEITLCRTDLEIQYETLSEELTYLKKNHKEEMQVLQCAAGGNVNVEMNAAPGVDLTVLLNNMRAEYEALAEQNRRDAEAWFNEKSASLQQQITEDVGATTSARNELTEMKRNLQTLEIELQSLLATKHSLECSLTETEGNYCAQLAQIQAQIGALEEQLHQVRTETEGQKLEYEQLLDIKVHLEKEIETYCLLIGGDDGACKSGGYKSKDYAAGNMGNQMKDPIKAIVVKKVLEEVDQRSKILTTRLHSLEEKSQSN</sequence>
<reference evidence="7" key="1">
    <citation type="submission" date="2003-12" db="EMBL/GenBank/DDBJ databases">
        <authorList>
            <person name="Yin J."/>
            <person name="Li J.Q."/>
            <person name="Zhou H.M."/>
        </authorList>
    </citation>
    <scope>NUCLEOTIDE SEQUENCE [MRNA]</scope>
</reference>
<dbReference type="EMBL" id="AY510111">
    <property type="protein sequence ID" value="AAS00518.1"/>
    <property type="molecule type" value="mRNA"/>
</dbReference>
<dbReference type="RefSeq" id="NP_001272695.1">
    <property type="nucleotide sequence ID" value="NM_001285766.1"/>
</dbReference>
<dbReference type="SMR" id="Q6R650"/>
<dbReference type="STRING" id="9925.ENSCHIP00000014359"/>
<dbReference type="Ensembl" id="ENSCHIT00000022153.1">
    <property type="protein sequence ID" value="ENSCHIP00000014359.1"/>
    <property type="gene ID" value="ENSCHIG00000015383.1"/>
</dbReference>
<dbReference type="Ensembl" id="ENSCHIT00040064718">
    <property type="protein sequence ID" value="ENSCHIP00040050768"/>
    <property type="gene ID" value="ENSCHIG00040030657"/>
</dbReference>
<dbReference type="GeneID" id="100861172"/>
<dbReference type="KEGG" id="chx:100861172"/>
<dbReference type="CTD" id="147183"/>
<dbReference type="GeneTree" id="ENSGT00940000161994"/>
<dbReference type="OMA" id="TGNSCGI"/>
<dbReference type="OrthoDB" id="2441647at2759"/>
<dbReference type="Proteomes" id="UP000291000">
    <property type="component" value="Chromosome 19"/>
</dbReference>
<dbReference type="Proteomes" id="UP000694566">
    <property type="component" value="Unplaced"/>
</dbReference>
<dbReference type="Bgee" id="ENSCHIG00000015383">
    <property type="expression patterns" value="Expressed in skin of neck and 13 other cell types or tissues"/>
</dbReference>
<dbReference type="GO" id="GO:0005737">
    <property type="term" value="C:cytoplasm"/>
    <property type="evidence" value="ECO:0007669"/>
    <property type="project" value="UniProtKB-SubCell"/>
</dbReference>
<dbReference type="GO" id="GO:0045095">
    <property type="term" value="C:keratin filament"/>
    <property type="evidence" value="ECO:0007669"/>
    <property type="project" value="Ensembl"/>
</dbReference>
<dbReference type="GO" id="GO:0046982">
    <property type="term" value="F:protein heterodimerization activity"/>
    <property type="evidence" value="ECO:0000250"/>
    <property type="project" value="UniProtKB"/>
</dbReference>
<dbReference type="GO" id="GO:0005198">
    <property type="term" value="F:structural molecule activity"/>
    <property type="evidence" value="ECO:0007669"/>
    <property type="project" value="InterPro"/>
</dbReference>
<dbReference type="GO" id="GO:0007010">
    <property type="term" value="P:cytoskeleton organization"/>
    <property type="evidence" value="ECO:0000250"/>
    <property type="project" value="UniProtKB"/>
</dbReference>
<dbReference type="GO" id="GO:0030855">
    <property type="term" value="P:epithelial cell differentiation"/>
    <property type="evidence" value="ECO:0007669"/>
    <property type="project" value="TreeGrafter"/>
</dbReference>
<dbReference type="GO" id="GO:0031069">
    <property type="term" value="P:hair follicle morphogenesis"/>
    <property type="evidence" value="ECO:0007669"/>
    <property type="project" value="Ensembl"/>
</dbReference>
<dbReference type="GO" id="GO:0045109">
    <property type="term" value="P:intermediate filament organization"/>
    <property type="evidence" value="ECO:0007669"/>
    <property type="project" value="Ensembl"/>
</dbReference>
<dbReference type="FunFam" id="1.20.5.1160:FF:000002">
    <property type="entry name" value="Type I keratin 10"/>
    <property type="match status" value="1"/>
</dbReference>
<dbReference type="FunFam" id="1.20.5.170:FF:000002">
    <property type="entry name" value="Type I keratin KA11"/>
    <property type="match status" value="1"/>
</dbReference>
<dbReference type="FunFam" id="1.20.5.500:FF:000001">
    <property type="entry name" value="Type II keratin 23"/>
    <property type="match status" value="1"/>
</dbReference>
<dbReference type="Gene3D" id="1.20.5.170">
    <property type="match status" value="1"/>
</dbReference>
<dbReference type="Gene3D" id="1.20.5.500">
    <property type="entry name" value="Single helix bin"/>
    <property type="match status" value="1"/>
</dbReference>
<dbReference type="Gene3D" id="1.20.5.1160">
    <property type="entry name" value="Vasodilator-stimulated phosphoprotein"/>
    <property type="match status" value="1"/>
</dbReference>
<dbReference type="InterPro" id="IPR039008">
    <property type="entry name" value="IF_rod_dom"/>
</dbReference>
<dbReference type="InterPro" id="IPR002957">
    <property type="entry name" value="Keratin_I"/>
</dbReference>
<dbReference type="PANTHER" id="PTHR23239">
    <property type="entry name" value="INTERMEDIATE FILAMENT"/>
    <property type="match status" value="1"/>
</dbReference>
<dbReference type="PANTHER" id="PTHR23239:SF160">
    <property type="entry name" value="KERATIN, TYPE I CYTOSKELETAL 25"/>
    <property type="match status" value="1"/>
</dbReference>
<dbReference type="Pfam" id="PF00038">
    <property type="entry name" value="Filament"/>
    <property type="match status" value="1"/>
</dbReference>
<dbReference type="PRINTS" id="PR01248">
    <property type="entry name" value="TYPE1KERATIN"/>
</dbReference>
<dbReference type="SMART" id="SM01391">
    <property type="entry name" value="Filament"/>
    <property type="match status" value="1"/>
</dbReference>
<dbReference type="SUPFAM" id="SSF64593">
    <property type="entry name" value="Intermediate filament protein, coiled coil region"/>
    <property type="match status" value="2"/>
</dbReference>
<dbReference type="PROSITE" id="PS51842">
    <property type="entry name" value="IF_ROD_2"/>
    <property type="match status" value="1"/>
</dbReference>
<name>K1C25_CAPHI</name>
<comment type="function">
    <text evidence="1 2">Essential for the proper assembly of type I and type II keratin protein complexes and formation of keratin intermediate filaments in the inner root sheath (irs) (By similarity). Plays a role in the cytoskeleton organization (By similarity).</text>
</comment>
<comment type="subunit">
    <text evidence="1 2 6">Heterodimer of a type I and a type II keratin. Heterodimer with type II keratin KRT5 leading to the formation of keratin intermediate filament (KIF) network. Interacts with KRT6A to form filaments.</text>
</comment>
<comment type="subcellular location">
    <subcellularLocation>
        <location evidence="2">Cytoplasm</location>
    </subcellularLocation>
</comment>
<comment type="miscellaneous">
    <text evidence="6">There are two types of cytoskeletal and microfibrillar keratin: I (acidic; 40-55 kDa) and II (neutral to basic; 56-70 kDa).</text>
</comment>
<comment type="similarity">
    <text evidence="4">Belongs to the intermediate filament family.</text>
</comment>
<organism>
    <name type="scientific">Capra hircus</name>
    <name type="common">Goat</name>
    <dbReference type="NCBI Taxonomy" id="9925"/>
    <lineage>
        <taxon>Eukaryota</taxon>
        <taxon>Metazoa</taxon>
        <taxon>Chordata</taxon>
        <taxon>Craniata</taxon>
        <taxon>Vertebrata</taxon>
        <taxon>Euteleostomi</taxon>
        <taxon>Mammalia</taxon>
        <taxon>Eutheria</taxon>
        <taxon>Laurasiatheria</taxon>
        <taxon>Artiodactyla</taxon>
        <taxon>Ruminantia</taxon>
        <taxon>Pecora</taxon>
        <taxon>Bovidae</taxon>
        <taxon>Caprinae</taxon>
        <taxon>Capra</taxon>
    </lineage>
</organism>
<keyword id="KW-0175">Coiled coil</keyword>
<keyword id="KW-0963">Cytoplasm</keyword>
<keyword id="KW-0403">Intermediate filament</keyword>
<keyword id="KW-0416">Keratin</keyword>
<keyword id="KW-0597">Phosphoprotein</keyword>
<keyword id="KW-1185">Reference proteome</keyword>
<protein>
    <recommendedName>
        <fullName>Keratin, type I cytoskeletal 25</fullName>
    </recommendedName>
    <alternativeName>
        <fullName>Cytokeratin-25</fullName>
        <shortName>CK-25</shortName>
    </alternativeName>
    <alternativeName>
        <fullName>Keratin-25</fullName>
        <shortName>K25</shortName>
    </alternativeName>
    <alternativeName>
        <fullName>Type I inner root sheath-specific keratin-K25irs1</fullName>
    </alternativeName>
    <alternativeName>
        <fullName>Type I keratin intermediate filament IRSa1</fullName>
    </alternativeName>
</protein>
<proteinExistence type="evidence at transcript level"/>
<feature type="chain" id="PRO_0000312690" description="Keratin, type I cytoskeletal 25">
    <location>
        <begin position="1"/>
        <end position="450"/>
    </location>
</feature>
<feature type="domain" description="IF rod" evidence="4">
    <location>
        <begin position="79"/>
        <end position="394"/>
    </location>
</feature>
<feature type="region of interest" description="Head" evidence="3">
    <location>
        <begin position="1"/>
        <end position="78"/>
    </location>
</feature>
<feature type="region of interest" description="Disordered" evidence="5">
    <location>
        <begin position="1"/>
        <end position="24"/>
    </location>
</feature>
<feature type="region of interest" description="Coil 1A" evidence="3">
    <location>
        <begin position="79"/>
        <end position="114"/>
    </location>
</feature>
<feature type="region of interest" description="Linker 1" evidence="3">
    <location>
        <begin position="115"/>
        <end position="136"/>
    </location>
</feature>
<feature type="region of interest" description="Coil 1B" evidence="3">
    <location>
        <begin position="137"/>
        <end position="228"/>
    </location>
</feature>
<feature type="region of interest" description="Linker 12" evidence="3">
    <location>
        <begin position="229"/>
        <end position="251"/>
    </location>
</feature>
<feature type="region of interest" description="Coil 2" evidence="3">
    <location>
        <begin position="252"/>
        <end position="390"/>
    </location>
</feature>
<feature type="region of interest" description="Tail" evidence="3">
    <location>
        <begin position="391"/>
        <end position="450"/>
    </location>
</feature>
<feature type="modified residue" description="Phosphoserine" evidence="1">
    <location>
        <position position="442"/>
    </location>
</feature>